<name>GNSB_ECOLI</name>
<comment type="function">
    <text evidence="1">Overexpression increases levels of unsaturated fatty acids and suppresses both the temperature-sensitive fabA6 mutation and cold-sensitive secG null mutation.</text>
</comment>
<comment type="similarity">
    <text evidence="2">Belongs to the gns family.</text>
</comment>
<reference key="1">
    <citation type="journal article" date="1996" name="DNA Res.">
        <title>A 570-kb DNA sequence of the Escherichia coli K-12 genome corresponding to the 28.0-40.1 min region on the linkage map.</title>
        <authorList>
            <person name="Aiba H."/>
            <person name="Baba T."/>
            <person name="Fujita K."/>
            <person name="Hayashi K."/>
            <person name="Inada T."/>
            <person name="Isono K."/>
            <person name="Itoh T."/>
            <person name="Kasai H."/>
            <person name="Kashimoto K."/>
            <person name="Kimura S."/>
            <person name="Kitakawa M."/>
            <person name="Kitagawa M."/>
            <person name="Makino K."/>
            <person name="Miki T."/>
            <person name="Mizobuchi K."/>
            <person name="Mori H."/>
            <person name="Mori T."/>
            <person name="Motomura K."/>
            <person name="Nakade S."/>
            <person name="Nakamura Y."/>
            <person name="Nashimoto H."/>
            <person name="Nishio Y."/>
            <person name="Oshima T."/>
            <person name="Saito N."/>
            <person name="Sampei G."/>
            <person name="Seki Y."/>
            <person name="Sivasundaram S."/>
            <person name="Tagami H."/>
            <person name="Takeda J."/>
            <person name="Takemoto K."/>
            <person name="Takeuchi Y."/>
            <person name="Wada C."/>
            <person name="Yamamoto Y."/>
            <person name="Horiuchi T."/>
        </authorList>
    </citation>
    <scope>NUCLEOTIDE SEQUENCE [LARGE SCALE GENOMIC DNA]</scope>
    <source>
        <strain>K12 / W3110 / ATCC 27325 / DSM 5911</strain>
    </source>
</reference>
<reference key="2">
    <citation type="journal article" date="1997" name="Science">
        <title>The complete genome sequence of Escherichia coli K-12.</title>
        <authorList>
            <person name="Blattner F.R."/>
            <person name="Plunkett G. III"/>
            <person name="Bloch C.A."/>
            <person name="Perna N.T."/>
            <person name="Burland V."/>
            <person name="Riley M."/>
            <person name="Collado-Vides J."/>
            <person name="Glasner J.D."/>
            <person name="Rode C.K."/>
            <person name="Mayhew G.F."/>
            <person name="Gregor J."/>
            <person name="Davis N.W."/>
            <person name="Kirkpatrick H.A."/>
            <person name="Goeden M.A."/>
            <person name="Rose D.J."/>
            <person name="Mau B."/>
            <person name="Shao Y."/>
        </authorList>
    </citation>
    <scope>NUCLEOTIDE SEQUENCE [LARGE SCALE GENOMIC DNA]</scope>
    <source>
        <strain>K12 / MG1655 / ATCC 47076</strain>
    </source>
</reference>
<reference key="3">
    <citation type="journal article" date="2006" name="Mol. Syst. Biol.">
        <title>Highly accurate genome sequences of Escherichia coli K-12 strains MG1655 and W3110.</title>
        <authorList>
            <person name="Hayashi K."/>
            <person name="Morooka N."/>
            <person name="Yamamoto Y."/>
            <person name="Fujita K."/>
            <person name="Isono K."/>
            <person name="Choi S."/>
            <person name="Ohtsubo E."/>
            <person name="Baba T."/>
            <person name="Wanner B.L."/>
            <person name="Mori H."/>
            <person name="Horiuchi T."/>
        </authorList>
    </citation>
    <scope>NUCLEOTIDE SEQUENCE [LARGE SCALE GENOMIC DNA]</scope>
    <source>
        <strain>K12 / W3110 / ATCC 27325 / DSM 5911</strain>
    </source>
</reference>
<reference key="4">
    <citation type="journal article" date="2001" name="J. Bacteriol.">
        <title>Overexpression of yccL (gnsA) and ydfY (gnsB) increases levels of unsaturated fatty acids and suppresses both the temperature-sensitive fabA6 mutation and cold-sensitive secG null mutation of Escherichia coli.</title>
        <authorList>
            <person name="Sugai R."/>
            <person name="Shimizu H."/>
            <person name="Nishiyama K."/>
            <person name="Tokuda H."/>
        </authorList>
    </citation>
    <scope>FUNCTION</scope>
</reference>
<accession>P77695</accession>
<evidence type="ECO:0000269" key="1">
    <source>
    </source>
</evidence>
<evidence type="ECO:0000305" key="2"/>
<dbReference type="EMBL" id="U00096">
    <property type="protein sequence ID" value="AAC74623.2"/>
    <property type="molecule type" value="Genomic_DNA"/>
</dbReference>
<dbReference type="EMBL" id="AP009048">
    <property type="protein sequence ID" value="BAA15253.2"/>
    <property type="molecule type" value="Genomic_DNA"/>
</dbReference>
<dbReference type="PIR" id="A64910">
    <property type="entry name" value="A64910"/>
</dbReference>
<dbReference type="RefSeq" id="NP_416068.2">
    <property type="nucleotide sequence ID" value="NC_000913.3"/>
</dbReference>
<dbReference type="RefSeq" id="WP_001019606.1">
    <property type="nucleotide sequence ID" value="NZ_SSUV01000066.1"/>
</dbReference>
<dbReference type="SMR" id="P77695"/>
<dbReference type="BioGRID" id="4260238">
    <property type="interactions" value="13"/>
</dbReference>
<dbReference type="BioGRID" id="850415">
    <property type="interactions" value="2"/>
</dbReference>
<dbReference type="FunCoup" id="P77695">
    <property type="interactions" value="23"/>
</dbReference>
<dbReference type="IntAct" id="P77695">
    <property type="interactions" value="1"/>
</dbReference>
<dbReference type="STRING" id="511145.b1550"/>
<dbReference type="jPOST" id="P77695"/>
<dbReference type="PaxDb" id="511145-b1550"/>
<dbReference type="EnsemblBacteria" id="AAC74623">
    <property type="protein sequence ID" value="AAC74623"/>
    <property type="gene ID" value="b1550"/>
</dbReference>
<dbReference type="GeneID" id="946054"/>
<dbReference type="KEGG" id="ecj:JW5253"/>
<dbReference type="KEGG" id="eco:b1550"/>
<dbReference type="KEGG" id="ecoc:C3026_08950"/>
<dbReference type="PATRIC" id="fig|1411691.4.peg.713"/>
<dbReference type="EchoBASE" id="EB3598"/>
<dbReference type="eggNOG" id="ENOG50332DR">
    <property type="taxonomic scope" value="Bacteria"/>
</dbReference>
<dbReference type="HOGENOM" id="CLU_197432_0_0_6"/>
<dbReference type="InParanoid" id="P77695"/>
<dbReference type="BioCyc" id="EcoCyc:G6823-MONOMER"/>
<dbReference type="PRO" id="PR:P77695"/>
<dbReference type="Proteomes" id="UP000000625">
    <property type="component" value="Chromosome"/>
</dbReference>
<dbReference type="GO" id="GO:0005829">
    <property type="term" value="C:cytosol"/>
    <property type="evidence" value="ECO:0000314"/>
    <property type="project" value="EcoCyc"/>
</dbReference>
<dbReference type="GO" id="GO:0006636">
    <property type="term" value="P:unsaturated fatty acid biosynthetic process"/>
    <property type="evidence" value="ECO:0000269"/>
    <property type="project" value="EcoCyc"/>
</dbReference>
<dbReference type="InterPro" id="IPR012563">
    <property type="entry name" value="Gns"/>
</dbReference>
<dbReference type="Pfam" id="PF08178">
    <property type="entry name" value="GnsAB_toxin"/>
    <property type="match status" value="1"/>
</dbReference>
<gene>
    <name type="primary">gnsB</name>
    <name type="synonym">ydfY</name>
    <name type="ordered locus">b1550</name>
    <name type="ordered locus">JW5253</name>
</gene>
<protein>
    <recommendedName>
        <fullName>Protein GnsB</fullName>
    </recommendedName>
</protein>
<feature type="chain" id="PRO_0000201724" description="Protein GnsB">
    <location>
        <begin position="1"/>
        <end position="57"/>
    </location>
</feature>
<keyword id="KW-1185">Reference proteome</keyword>
<sequence>MNIENLKTKAEADISEYITKKIIELKKKTGKEVTSIQFTAREKMTGLESYDVKINLI</sequence>
<organism>
    <name type="scientific">Escherichia coli (strain K12)</name>
    <dbReference type="NCBI Taxonomy" id="83333"/>
    <lineage>
        <taxon>Bacteria</taxon>
        <taxon>Pseudomonadati</taxon>
        <taxon>Pseudomonadota</taxon>
        <taxon>Gammaproteobacteria</taxon>
        <taxon>Enterobacterales</taxon>
        <taxon>Enterobacteriaceae</taxon>
        <taxon>Escherichia</taxon>
    </lineage>
</organism>
<proteinExistence type="inferred from homology"/>